<reference key="1">
    <citation type="journal article" date="2001" name="Lancet">
        <title>Whole genome sequencing of meticillin-resistant Staphylococcus aureus.</title>
        <authorList>
            <person name="Kuroda M."/>
            <person name="Ohta T."/>
            <person name="Uchiyama I."/>
            <person name="Baba T."/>
            <person name="Yuzawa H."/>
            <person name="Kobayashi I."/>
            <person name="Cui L."/>
            <person name="Oguchi A."/>
            <person name="Aoki K."/>
            <person name="Nagai Y."/>
            <person name="Lian J.-Q."/>
            <person name="Ito T."/>
            <person name="Kanamori M."/>
            <person name="Matsumaru H."/>
            <person name="Maruyama A."/>
            <person name="Murakami H."/>
            <person name="Hosoyama A."/>
            <person name="Mizutani-Ui Y."/>
            <person name="Takahashi N.K."/>
            <person name="Sawano T."/>
            <person name="Inoue R."/>
            <person name="Kaito C."/>
            <person name="Sekimizu K."/>
            <person name="Hirakawa H."/>
            <person name="Kuhara S."/>
            <person name="Goto S."/>
            <person name="Yabuzaki J."/>
            <person name="Kanehisa M."/>
            <person name="Yamashita A."/>
            <person name="Oshima K."/>
            <person name="Furuya K."/>
            <person name="Yoshino C."/>
            <person name="Shiba T."/>
            <person name="Hattori M."/>
            <person name="Ogasawara N."/>
            <person name="Hayashi H."/>
            <person name="Hiramatsu K."/>
        </authorList>
    </citation>
    <scope>NUCLEOTIDE SEQUENCE [LARGE SCALE GENOMIC DNA]</scope>
    <source>
        <strain>Mu50 / ATCC 700699</strain>
    </source>
</reference>
<gene>
    <name type="ordered locus">SAV2486</name>
</gene>
<protein>
    <recommendedName>
        <fullName>Uncharacterized protein SAV2486</fullName>
    </recommendedName>
</protein>
<evidence type="ECO:0000255" key="1"/>
<evidence type="ECO:0000305" key="2"/>
<sequence length="257" mass="30133">MMHSKKLMLGICLVLLIILIVGYVIMTKINSRSAQIKDTFNQTLKLYPTKNLEDFYDKEGFRDQEFEKGDKGNWIVDSEMVIELKDKKMESRSMVLYINRNTRTTKGNFIVRELWEDSKGYAQSKDTKYPVKMEHNRIIPTKPIADDKLRKEIENFKFFVQYGDFKDINDYKDGDISYNPNVPSYSAKYQLKNDDYNVKQLRKRYNIPTNKAPKLLLKGDGDLKGSSIGSKNLEFTFVENKEENIYFSDSINFKPTE</sequence>
<accession>Q99RE7</accession>
<dbReference type="EMBL" id="BA000017">
    <property type="protein sequence ID" value="BAB58648.1"/>
    <property type="molecule type" value="Genomic_DNA"/>
</dbReference>
<dbReference type="RefSeq" id="WP_000972280.1">
    <property type="nucleotide sequence ID" value="NC_002758.2"/>
</dbReference>
<dbReference type="SMR" id="Q99RE7"/>
<dbReference type="KEGG" id="sav:SAV2486"/>
<dbReference type="HOGENOM" id="CLU_071589_0_1_9"/>
<dbReference type="PhylomeDB" id="Q99RE7"/>
<dbReference type="Proteomes" id="UP000002481">
    <property type="component" value="Chromosome"/>
</dbReference>
<dbReference type="GO" id="GO:0005886">
    <property type="term" value="C:plasma membrane"/>
    <property type="evidence" value="ECO:0007669"/>
    <property type="project" value="UniProtKB-SubCell"/>
</dbReference>
<dbReference type="Gene3D" id="2.50.20.40">
    <property type="match status" value="1"/>
</dbReference>
<dbReference type="InterPro" id="IPR007595">
    <property type="entry name" value="Csa"/>
</dbReference>
<dbReference type="InterPro" id="IPR038641">
    <property type="entry name" value="Csa_sf"/>
</dbReference>
<dbReference type="NCBIfam" id="TIGR01742">
    <property type="entry name" value="SA_tandem_lipo"/>
    <property type="match status" value="1"/>
</dbReference>
<dbReference type="Pfam" id="PF04507">
    <property type="entry name" value="DUF576"/>
    <property type="match status" value="1"/>
</dbReference>
<proteinExistence type="inferred from homology"/>
<keyword id="KW-1003">Cell membrane</keyword>
<keyword id="KW-0472">Membrane</keyword>
<keyword id="KW-0812">Transmembrane</keyword>
<keyword id="KW-1133">Transmembrane helix</keyword>
<comment type="subcellular location">
    <subcellularLocation>
        <location evidence="2">Cell membrane</location>
        <topology evidence="2">Single-pass membrane protein</topology>
    </subcellularLocation>
</comment>
<comment type="similarity">
    <text evidence="2">Belongs to the staphylococcal tandem lipoprotein family.</text>
</comment>
<feature type="chain" id="PRO_0000282121" description="Uncharacterized protein SAV2486">
    <location>
        <begin position="1"/>
        <end position="257"/>
    </location>
</feature>
<feature type="transmembrane region" description="Helical" evidence="1">
    <location>
        <begin position="7"/>
        <end position="27"/>
    </location>
</feature>
<organism>
    <name type="scientific">Staphylococcus aureus (strain Mu50 / ATCC 700699)</name>
    <dbReference type="NCBI Taxonomy" id="158878"/>
    <lineage>
        <taxon>Bacteria</taxon>
        <taxon>Bacillati</taxon>
        <taxon>Bacillota</taxon>
        <taxon>Bacilli</taxon>
        <taxon>Bacillales</taxon>
        <taxon>Staphylococcaceae</taxon>
        <taxon>Staphylococcus</taxon>
    </lineage>
</organism>
<name>Y2486_STAAM</name>